<name>RS9_THESQ</name>
<dbReference type="EMBL" id="CP000969">
    <property type="protein sequence ID" value="ACB09689.1"/>
    <property type="molecule type" value="Genomic_DNA"/>
</dbReference>
<dbReference type="RefSeq" id="WP_012311087.1">
    <property type="nucleotide sequence ID" value="NC_010483.1"/>
</dbReference>
<dbReference type="SMR" id="B1LBJ1"/>
<dbReference type="KEGG" id="trq:TRQ2_1345"/>
<dbReference type="HOGENOM" id="CLU_046483_2_1_0"/>
<dbReference type="Proteomes" id="UP000001687">
    <property type="component" value="Chromosome"/>
</dbReference>
<dbReference type="GO" id="GO:0022627">
    <property type="term" value="C:cytosolic small ribosomal subunit"/>
    <property type="evidence" value="ECO:0007669"/>
    <property type="project" value="TreeGrafter"/>
</dbReference>
<dbReference type="GO" id="GO:0003723">
    <property type="term" value="F:RNA binding"/>
    <property type="evidence" value="ECO:0007669"/>
    <property type="project" value="TreeGrafter"/>
</dbReference>
<dbReference type="GO" id="GO:0003735">
    <property type="term" value="F:structural constituent of ribosome"/>
    <property type="evidence" value="ECO:0007669"/>
    <property type="project" value="InterPro"/>
</dbReference>
<dbReference type="GO" id="GO:0006412">
    <property type="term" value="P:translation"/>
    <property type="evidence" value="ECO:0007669"/>
    <property type="project" value="UniProtKB-UniRule"/>
</dbReference>
<dbReference type="FunFam" id="3.30.230.10:FF:000001">
    <property type="entry name" value="30S ribosomal protein S9"/>
    <property type="match status" value="1"/>
</dbReference>
<dbReference type="Gene3D" id="3.30.230.10">
    <property type="match status" value="1"/>
</dbReference>
<dbReference type="HAMAP" id="MF_00532_B">
    <property type="entry name" value="Ribosomal_uS9_B"/>
    <property type="match status" value="1"/>
</dbReference>
<dbReference type="InterPro" id="IPR020568">
    <property type="entry name" value="Ribosomal_Su5_D2-typ_SF"/>
</dbReference>
<dbReference type="InterPro" id="IPR000754">
    <property type="entry name" value="Ribosomal_uS9"/>
</dbReference>
<dbReference type="InterPro" id="IPR023035">
    <property type="entry name" value="Ribosomal_uS9_bac/plastid"/>
</dbReference>
<dbReference type="InterPro" id="IPR020574">
    <property type="entry name" value="Ribosomal_uS9_CS"/>
</dbReference>
<dbReference type="InterPro" id="IPR014721">
    <property type="entry name" value="Ribsml_uS5_D2-typ_fold_subgr"/>
</dbReference>
<dbReference type="NCBIfam" id="NF001099">
    <property type="entry name" value="PRK00132.1"/>
    <property type="match status" value="1"/>
</dbReference>
<dbReference type="PANTHER" id="PTHR21569">
    <property type="entry name" value="RIBOSOMAL PROTEIN S9"/>
    <property type="match status" value="1"/>
</dbReference>
<dbReference type="PANTHER" id="PTHR21569:SF1">
    <property type="entry name" value="SMALL RIBOSOMAL SUBUNIT PROTEIN US9M"/>
    <property type="match status" value="1"/>
</dbReference>
<dbReference type="Pfam" id="PF00380">
    <property type="entry name" value="Ribosomal_S9"/>
    <property type="match status" value="1"/>
</dbReference>
<dbReference type="SUPFAM" id="SSF54211">
    <property type="entry name" value="Ribosomal protein S5 domain 2-like"/>
    <property type="match status" value="1"/>
</dbReference>
<dbReference type="PROSITE" id="PS00360">
    <property type="entry name" value="RIBOSOMAL_S9"/>
    <property type="match status" value="1"/>
</dbReference>
<feature type="chain" id="PRO_1000128191" description="Small ribosomal subunit protein uS9">
    <location>
        <begin position="1"/>
        <end position="134"/>
    </location>
</feature>
<feature type="region of interest" description="Disordered" evidence="2">
    <location>
        <begin position="114"/>
        <end position="134"/>
    </location>
</feature>
<feature type="compositionally biased region" description="Basic residues" evidence="2">
    <location>
        <begin position="120"/>
        <end position="134"/>
    </location>
</feature>
<keyword id="KW-0687">Ribonucleoprotein</keyword>
<keyword id="KW-0689">Ribosomal protein</keyword>
<evidence type="ECO:0000255" key="1">
    <source>
        <dbReference type="HAMAP-Rule" id="MF_00532"/>
    </source>
</evidence>
<evidence type="ECO:0000256" key="2">
    <source>
        <dbReference type="SAM" id="MobiDB-lite"/>
    </source>
</evidence>
<evidence type="ECO:0000305" key="3"/>
<sequence length="134" mass="15212">MAEVIGYYGTGRRKTAVARVYLRPGEGKVKVNGKEYESLNDYFKNPAWTKHAIEPLEVTNTLGKFDLVIRVNGGGLSGQSGAVRLGIARALLQYDQNLRPVLKKYKMLTRDPREVERKKYGLKKARRAPQFSKR</sequence>
<comment type="similarity">
    <text evidence="1">Belongs to the universal ribosomal protein uS9 family.</text>
</comment>
<gene>
    <name evidence="1" type="primary">rpsI</name>
    <name type="ordered locus">TRQ2_1345</name>
</gene>
<proteinExistence type="inferred from homology"/>
<reference key="1">
    <citation type="journal article" date="2011" name="J. Bacteriol.">
        <title>Genome sequence of Thermotoga sp. strain RQ2, a hyperthermophilic bacterium isolated from a geothermally heated region of the seafloor near Ribeira Quente, the Azores.</title>
        <authorList>
            <person name="Swithers K.S."/>
            <person name="DiPippo J.L."/>
            <person name="Bruce D.C."/>
            <person name="Detter C."/>
            <person name="Tapia R."/>
            <person name="Han S."/>
            <person name="Saunders E."/>
            <person name="Goodwin L.A."/>
            <person name="Han J."/>
            <person name="Woyke T."/>
            <person name="Pitluck S."/>
            <person name="Pennacchio L."/>
            <person name="Nolan M."/>
            <person name="Mikhailova N."/>
            <person name="Lykidis A."/>
            <person name="Land M.L."/>
            <person name="Brettin T."/>
            <person name="Stetter K.O."/>
            <person name="Nelson K.E."/>
            <person name="Gogarten J.P."/>
            <person name="Noll K.M."/>
        </authorList>
    </citation>
    <scope>NUCLEOTIDE SEQUENCE [LARGE SCALE GENOMIC DNA]</scope>
    <source>
        <strain>RQ2</strain>
    </source>
</reference>
<protein>
    <recommendedName>
        <fullName evidence="1">Small ribosomal subunit protein uS9</fullName>
    </recommendedName>
    <alternativeName>
        <fullName evidence="3">30S ribosomal protein S9</fullName>
    </alternativeName>
</protein>
<accession>B1LBJ1</accession>
<organism>
    <name type="scientific">Thermotoga sp. (strain RQ2)</name>
    <dbReference type="NCBI Taxonomy" id="126740"/>
    <lineage>
        <taxon>Bacteria</taxon>
        <taxon>Thermotogati</taxon>
        <taxon>Thermotogota</taxon>
        <taxon>Thermotogae</taxon>
        <taxon>Thermotogales</taxon>
        <taxon>Thermotogaceae</taxon>
        <taxon>Thermotoga</taxon>
    </lineage>
</organism>